<proteinExistence type="evidence at protein level"/>
<keyword id="KW-0121">Carboxypeptidase</keyword>
<keyword id="KW-0903">Direct protein sequencing</keyword>
<keyword id="KW-1015">Disulfide bond</keyword>
<keyword id="KW-0325">Glycoprotein</keyword>
<keyword id="KW-0378">Hydrolase</keyword>
<keyword id="KW-0645">Protease</keyword>
<keyword id="KW-0865">Zymogen</keyword>
<organism>
    <name type="scientific">Hordeum vulgare</name>
    <name type="common">Barley</name>
    <dbReference type="NCBI Taxonomy" id="4513"/>
    <lineage>
        <taxon>Eukaryota</taxon>
        <taxon>Viridiplantae</taxon>
        <taxon>Streptophyta</taxon>
        <taxon>Embryophyta</taxon>
        <taxon>Tracheophyta</taxon>
        <taxon>Spermatophyta</taxon>
        <taxon>Magnoliopsida</taxon>
        <taxon>Liliopsida</taxon>
        <taxon>Poales</taxon>
        <taxon>Poaceae</taxon>
        <taxon>BOP clade</taxon>
        <taxon>Pooideae</taxon>
        <taxon>Triticodae</taxon>
        <taxon>Triticeae</taxon>
        <taxon>Hordeinae</taxon>
        <taxon>Hordeum</taxon>
    </lineage>
</organism>
<sequence length="324" mass="37408">GSDLLTPGDNKTAHDSYAFLVNWLERFPQYKYRDFYIAGESYAGHYVPQLSQLVHRNNKGVRKPILNFKGFMVGNAVIDDYHDFVGTFEYWWTHGLISDDTYQKLQLACEFDSAEHESEACNKINNVAEAEEGLIDAYSIYTPTCKKTSLHRRRLIKGRRPWLPRGYDPCTEQYSTKYYNLPEVQKAFRANVTGIPYSWTACSDVLSDHWKDSPRSMLPIYRELIAAGIRIWVFSGDADSVVPLTATRYSIDALYLPTVTNWYPWYDEEEVAGWCQVYKGLTLVTIRGAGHEVPLHRPQQALKLFEHFLQDKPMPRPAHSIQSF</sequence>
<protein>
    <recommendedName>
        <fullName>Serine carboxypeptidase II-1</fullName>
        <ecNumber>3.4.16.6</ecNumber>
    </recommendedName>
    <alternativeName>
        <fullName>CP-MII.1</fullName>
    </alternativeName>
    <component>
        <recommendedName>
            <fullName>Serine carboxypeptidase II-1 chain A</fullName>
        </recommendedName>
    </component>
    <component>
        <recommendedName>
            <fullName>Serine carboxypeptidase II-1 chain B</fullName>
        </recommendedName>
    </component>
</protein>
<feature type="chain" id="PRO_0000004314" description="Serine carboxypeptidase II-1 chain A">
    <location>
        <begin position="1" status="less than"/>
        <end position="149"/>
    </location>
</feature>
<feature type="propeptide" id="PRO_0000004315" description="Linker peptide" evidence="1">
    <location>
        <begin position="150"/>
        <end position="162"/>
    </location>
</feature>
<feature type="chain" id="PRO_0000004316" description="Serine carboxypeptidase II-1 chain B">
    <location>
        <begin position="163"/>
        <end position="324"/>
    </location>
</feature>
<feature type="active site" evidence="1">
    <location>
        <position position="41"/>
    </location>
</feature>
<feature type="active site" evidence="1">
    <location>
        <position position="239"/>
    </location>
</feature>
<feature type="active site" evidence="1">
    <location>
        <position position="291"/>
    </location>
</feature>
<feature type="glycosylation site" description="N-linked (GlcNAc...) asparagine" evidence="2">
    <location>
        <position position="10"/>
    </location>
</feature>
<feature type="glycosylation site" description="N-linked (GlcNAc...) asparagine" evidence="2">
    <location>
        <position position="191"/>
    </location>
</feature>
<feature type="disulfide bond" evidence="1">
    <location>
        <begin position="109"/>
        <end position="121"/>
    </location>
</feature>
<feature type="disulfide bond" description="Interchain (between A and B chains)" evidence="1">
    <location>
        <begin position="145"/>
        <end position="170"/>
    </location>
</feature>
<feature type="non-terminal residue">
    <location>
        <position position="1"/>
    </location>
</feature>
<accession>P55747</accession>
<dbReference type="EC" id="3.4.16.6"/>
<dbReference type="EMBL" id="X78876">
    <property type="protein sequence ID" value="CAB58992.1"/>
    <property type="molecule type" value="mRNA"/>
</dbReference>
<dbReference type="SMR" id="P55747"/>
<dbReference type="ESTHER" id="horvu-cp21">
    <property type="family name" value="Carboxypeptidase_S10"/>
</dbReference>
<dbReference type="MEROPS" id="S10.005"/>
<dbReference type="GlyCosmos" id="P55747">
    <property type="glycosylation" value="2 sites, No reported glycans"/>
</dbReference>
<dbReference type="ExpressionAtlas" id="P55747">
    <property type="expression patterns" value="baseline and differential"/>
</dbReference>
<dbReference type="GO" id="GO:0005773">
    <property type="term" value="C:vacuole"/>
    <property type="evidence" value="ECO:0007669"/>
    <property type="project" value="TreeGrafter"/>
</dbReference>
<dbReference type="GO" id="GO:0004185">
    <property type="term" value="F:serine-type carboxypeptidase activity"/>
    <property type="evidence" value="ECO:0007669"/>
    <property type="project" value="UniProtKB-EC"/>
</dbReference>
<dbReference type="GO" id="GO:0006508">
    <property type="term" value="P:proteolysis"/>
    <property type="evidence" value="ECO:0007669"/>
    <property type="project" value="UniProtKB-KW"/>
</dbReference>
<dbReference type="FunFam" id="3.40.50.11320:FF:000003">
    <property type="entry name" value="Carboxypeptidase"/>
    <property type="match status" value="1"/>
</dbReference>
<dbReference type="FunFam" id="3.40.50.12670:FF:000002">
    <property type="entry name" value="Carboxypeptidase"/>
    <property type="match status" value="1"/>
</dbReference>
<dbReference type="Gene3D" id="3.40.50.11320">
    <property type="match status" value="1"/>
</dbReference>
<dbReference type="Gene3D" id="6.10.250.940">
    <property type="match status" value="1"/>
</dbReference>
<dbReference type="Gene3D" id="3.40.50.1820">
    <property type="entry name" value="alpha/beta hydrolase"/>
    <property type="match status" value="1"/>
</dbReference>
<dbReference type="InterPro" id="IPR029058">
    <property type="entry name" value="AB_hydrolase_fold"/>
</dbReference>
<dbReference type="InterPro" id="IPR001563">
    <property type="entry name" value="Peptidase_S10"/>
</dbReference>
<dbReference type="InterPro" id="IPR033124">
    <property type="entry name" value="Ser_caboxypep_his_AS"/>
</dbReference>
<dbReference type="InterPro" id="IPR018202">
    <property type="entry name" value="Ser_caboxypep_ser_AS"/>
</dbReference>
<dbReference type="PANTHER" id="PTHR11802:SF106">
    <property type="entry name" value="CARBOXYPEPTIDASE"/>
    <property type="match status" value="1"/>
</dbReference>
<dbReference type="PANTHER" id="PTHR11802">
    <property type="entry name" value="SERINE PROTEASE FAMILY S10 SERINE CARBOXYPEPTIDASE"/>
    <property type="match status" value="1"/>
</dbReference>
<dbReference type="Pfam" id="PF00450">
    <property type="entry name" value="Peptidase_S10"/>
    <property type="match status" value="1"/>
</dbReference>
<dbReference type="PRINTS" id="PR00724">
    <property type="entry name" value="CRBOXYPTASEC"/>
</dbReference>
<dbReference type="SUPFAM" id="SSF53474">
    <property type="entry name" value="alpha/beta-Hydrolases"/>
    <property type="match status" value="1"/>
</dbReference>
<dbReference type="PROSITE" id="PS00560">
    <property type="entry name" value="CARBOXYPEPT_SER_HIS"/>
    <property type="match status" value="1"/>
</dbReference>
<dbReference type="PROSITE" id="PS00131">
    <property type="entry name" value="CARBOXYPEPT_SER_SER"/>
    <property type="match status" value="1"/>
</dbReference>
<gene>
    <name type="primary">CXP;2-1</name>
</gene>
<reference key="1">
    <citation type="journal article" date="1994" name="Proc. Natl. Acad. Sci. U.S.A.">
        <title>The expression of serine carboxypeptidases during maturation and germination of the barley grain.</title>
        <authorList>
            <person name="Dal Degan F."/>
            <person name="Rocher A."/>
            <person name="Cameron-Mills V."/>
            <person name="von Wettstein D."/>
        </authorList>
    </citation>
    <scope>NUCLEOTIDE SEQUENCE [MRNA]</scope>
    <scope>PARTIAL PROTEIN SEQUENCE</scope>
    <source>
        <strain>cv. Alexis</strain>
        <tissue>Grain</tissue>
    </source>
</reference>
<comment type="catalytic activity">
    <reaction>
        <text>Preferential release of a C-terminal arginine or lysine residue.</text>
        <dbReference type="EC" id="3.4.16.6"/>
    </reaction>
</comment>
<comment type="subunit">
    <text evidence="1">Carboxypeptidase II is a dimer, where each monomer is composed of two chains linked by a disulfide bond.</text>
</comment>
<comment type="developmental stage">
    <text>Expressed in the germinating embryo. Low levels in the developing aleurone and embryo. Also found in the roots and shoots of the growing seedling.</text>
</comment>
<comment type="PTM">
    <text evidence="1">The linker peptide is endoproteolytically excised during enzyme maturation.</text>
</comment>
<comment type="similarity">
    <text evidence="3">Belongs to the peptidase S10 family.</text>
</comment>
<name>CBP21_HORVU</name>
<evidence type="ECO:0000250" key="1"/>
<evidence type="ECO:0000255" key="2"/>
<evidence type="ECO:0000305" key="3"/>